<protein>
    <recommendedName>
        <fullName>Serine/threonine-protein kinase 32C</fullName>
        <ecNumber>2.7.11.1</ecNumber>
    </recommendedName>
    <alternativeName>
        <fullName>PKE</fullName>
    </alternativeName>
    <alternativeName>
        <fullName>Yet another novel kinase 3</fullName>
    </alternativeName>
</protein>
<proteinExistence type="evidence at protein level"/>
<comment type="catalytic activity">
    <reaction evidence="1">
        <text>L-seryl-[protein] + ATP = O-phospho-L-seryl-[protein] + ADP + H(+)</text>
        <dbReference type="Rhea" id="RHEA:17989"/>
        <dbReference type="Rhea" id="RHEA-COMP:9863"/>
        <dbReference type="Rhea" id="RHEA-COMP:11604"/>
        <dbReference type="ChEBI" id="CHEBI:15378"/>
        <dbReference type="ChEBI" id="CHEBI:29999"/>
        <dbReference type="ChEBI" id="CHEBI:30616"/>
        <dbReference type="ChEBI" id="CHEBI:83421"/>
        <dbReference type="ChEBI" id="CHEBI:456216"/>
        <dbReference type="EC" id="2.7.11.1"/>
    </reaction>
</comment>
<comment type="catalytic activity">
    <reaction evidence="1">
        <text>L-threonyl-[protein] + ATP = O-phospho-L-threonyl-[protein] + ADP + H(+)</text>
        <dbReference type="Rhea" id="RHEA:46608"/>
        <dbReference type="Rhea" id="RHEA-COMP:11060"/>
        <dbReference type="Rhea" id="RHEA-COMP:11605"/>
        <dbReference type="ChEBI" id="CHEBI:15378"/>
        <dbReference type="ChEBI" id="CHEBI:30013"/>
        <dbReference type="ChEBI" id="CHEBI:30616"/>
        <dbReference type="ChEBI" id="CHEBI:61977"/>
        <dbReference type="ChEBI" id="CHEBI:456216"/>
        <dbReference type="EC" id="2.7.11.1"/>
    </reaction>
</comment>
<comment type="cofactor">
    <cofactor evidence="1">
        <name>Mg(2+)</name>
        <dbReference type="ChEBI" id="CHEBI:18420"/>
    </cofactor>
</comment>
<comment type="interaction">
    <interactant intactId="EBI-1050045">
        <id>Q86UX6</id>
    </interactant>
    <interactant intactId="EBI-740220">
        <id>O14964</id>
        <label>HGS</label>
    </interactant>
    <organismsDiffer>false</organismsDiffer>
    <experiments>3</experiments>
</comment>
<comment type="interaction">
    <interactant intactId="EBI-1050045">
        <id>Q86UX6</id>
    </interactant>
    <interactant intactId="EBI-352572">
        <id>P08238</id>
        <label>HSP90AB1</label>
    </interactant>
    <organismsDiffer>false</organismsDiffer>
    <experiments>2</experiments>
</comment>
<comment type="interaction">
    <interactant intactId="EBI-1050045">
        <id>Q86UX6</id>
    </interactant>
    <interactant intactId="EBI-356498">
        <id>P62258</id>
        <label>YWHAE</label>
    </interactant>
    <organismsDiffer>false</organismsDiffer>
    <experiments>2</experiments>
</comment>
<comment type="alternative products">
    <event type="alternative splicing"/>
    <isoform>
        <id>Q86UX6-1</id>
        <name>1</name>
        <sequence type="displayed"/>
    </isoform>
    <isoform>
        <id>Q86UX6-2</id>
        <name evidence="6">2</name>
        <sequence type="described" ref="VSP_051998"/>
    </isoform>
</comment>
<comment type="similarity">
    <text evidence="3">Belongs to the protein kinase superfamily. Ser/Thr protein kinase family.</text>
</comment>
<sequence>MRSGAERRGSSAAASPGSPPPGRARPAGSDAPSALPPPAAGQPRARDSGDVRSQPRPLFQWSKWKKRMGSSMSAATARRPVFDDKEDVNFDHFQILRAIGKGSFGKVCIVQKRDTEKMYAMKYMNKQQCIERDEVRNVFRELEILQEIEHVFLVNLWYSFQDEEDMFMVVDLLLGGDLRYHLQQNVQFSEDTVRLYICEMALALDYLRGQHIIHRDVKPDNILLDERGHAHLTDFNIATIIKDGERATALAGTKPYMAPEIFHSFVNGGTGYSFEVDWWSVGVMAYELLRGWRPYDIHSSNAVESLVQLFSTVSVQYVPTWSKEMVALLRKLLTVNPEHRLSSLQDVQAAPALAGVLWDHLSEKRVEPGFVPNKGRLHCDPTFELEEMILESRPLHKKKKRLAKNKSRDNSRDSSQSENDYLQDCLDAIQQDFVIFNREKLKRSQDLPREPLPAPESRDAAEPVEDEAERSALPMCGPICPSAGSG</sequence>
<name>ST32C_HUMAN</name>
<reference evidence="11 13" key="1">
    <citation type="submission" date="2002-04" db="EMBL/GenBank/DDBJ databases">
        <title>PKE, a new human AGC group kinase, phosphorylates SET, a PP2A inhibitor.</title>
        <authorList>
            <person name="Ma A.-H."/>
            <person name="Nelson D.A."/>
            <person name="Xia L."/>
            <person name="Ravi L."/>
            <person name="Chen H.-C."/>
            <person name="Robinson D.R."/>
            <person name="Kung H.-J."/>
        </authorList>
    </citation>
    <scope>NUCLEOTIDE SEQUENCE [MRNA] (ISOFORM 1)</scope>
</reference>
<reference evidence="14" key="2">
    <citation type="journal article" date="2004" name="Nature">
        <title>The DNA sequence and comparative analysis of human chromosome 10.</title>
        <authorList>
            <person name="Deloukas P."/>
            <person name="Earthrowl M.E."/>
            <person name="Grafham D.V."/>
            <person name="Rubenfield M."/>
            <person name="French L."/>
            <person name="Steward C.A."/>
            <person name="Sims S.K."/>
            <person name="Jones M.C."/>
            <person name="Searle S."/>
            <person name="Scott C."/>
            <person name="Howe K."/>
            <person name="Hunt S.E."/>
            <person name="Andrews T.D."/>
            <person name="Gilbert J.G.R."/>
            <person name="Swarbreck D."/>
            <person name="Ashurst J.L."/>
            <person name="Taylor A."/>
            <person name="Battles J."/>
            <person name="Bird C.P."/>
            <person name="Ainscough R."/>
            <person name="Almeida J.P."/>
            <person name="Ashwell R.I.S."/>
            <person name="Ambrose K.D."/>
            <person name="Babbage A.K."/>
            <person name="Bagguley C.L."/>
            <person name="Bailey J."/>
            <person name="Banerjee R."/>
            <person name="Bates K."/>
            <person name="Beasley H."/>
            <person name="Bray-Allen S."/>
            <person name="Brown A.J."/>
            <person name="Brown J.Y."/>
            <person name="Burford D.C."/>
            <person name="Burrill W."/>
            <person name="Burton J."/>
            <person name="Cahill P."/>
            <person name="Camire D."/>
            <person name="Carter N.P."/>
            <person name="Chapman J.C."/>
            <person name="Clark S.Y."/>
            <person name="Clarke G."/>
            <person name="Clee C.M."/>
            <person name="Clegg S."/>
            <person name="Corby N."/>
            <person name="Coulson A."/>
            <person name="Dhami P."/>
            <person name="Dutta I."/>
            <person name="Dunn M."/>
            <person name="Faulkner L."/>
            <person name="Frankish A."/>
            <person name="Frankland J.A."/>
            <person name="Garner P."/>
            <person name="Garnett J."/>
            <person name="Gribble S."/>
            <person name="Griffiths C."/>
            <person name="Grocock R."/>
            <person name="Gustafson E."/>
            <person name="Hammond S."/>
            <person name="Harley J.L."/>
            <person name="Hart E."/>
            <person name="Heath P.D."/>
            <person name="Ho T.P."/>
            <person name="Hopkins B."/>
            <person name="Horne J."/>
            <person name="Howden P.J."/>
            <person name="Huckle E."/>
            <person name="Hynds C."/>
            <person name="Johnson C."/>
            <person name="Johnson D."/>
            <person name="Kana A."/>
            <person name="Kay M."/>
            <person name="Kimberley A.M."/>
            <person name="Kershaw J.K."/>
            <person name="Kokkinaki M."/>
            <person name="Laird G.K."/>
            <person name="Lawlor S."/>
            <person name="Lee H.M."/>
            <person name="Leongamornlert D.A."/>
            <person name="Laird G."/>
            <person name="Lloyd C."/>
            <person name="Lloyd D.M."/>
            <person name="Loveland J."/>
            <person name="Lovell J."/>
            <person name="McLaren S."/>
            <person name="McLay K.E."/>
            <person name="McMurray A."/>
            <person name="Mashreghi-Mohammadi M."/>
            <person name="Matthews L."/>
            <person name="Milne S."/>
            <person name="Nickerson T."/>
            <person name="Nguyen M."/>
            <person name="Overton-Larty E."/>
            <person name="Palmer S.A."/>
            <person name="Pearce A.V."/>
            <person name="Peck A.I."/>
            <person name="Pelan S."/>
            <person name="Phillimore B."/>
            <person name="Porter K."/>
            <person name="Rice C.M."/>
            <person name="Rogosin A."/>
            <person name="Ross M.T."/>
            <person name="Sarafidou T."/>
            <person name="Sehra H.K."/>
            <person name="Shownkeen R."/>
            <person name="Skuce C.D."/>
            <person name="Smith M."/>
            <person name="Standring L."/>
            <person name="Sycamore N."/>
            <person name="Tester J."/>
            <person name="Thorpe A."/>
            <person name="Torcasso W."/>
            <person name="Tracey A."/>
            <person name="Tromans A."/>
            <person name="Tsolas J."/>
            <person name="Wall M."/>
            <person name="Walsh J."/>
            <person name="Wang H."/>
            <person name="Weinstock K."/>
            <person name="West A.P."/>
            <person name="Willey D.L."/>
            <person name="Whitehead S.L."/>
            <person name="Wilming L."/>
            <person name="Wray P.W."/>
            <person name="Young L."/>
            <person name="Chen Y."/>
            <person name="Lovering R.C."/>
            <person name="Moschonas N.K."/>
            <person name="Siebert R."/>
            <person name="Fechtel K."/>
            <person name="Bentley D."/>
            <person name="Durbin R.M."/>
            <person name="Hubbard T."/>
            <person name="Doucette-Stamm L."/>
            <person name="Beck S."/>
            <person name="Smith D.R."/>
            <person name="Rogers J."/>
        </authorList>
    </citation>
    <scope>NUCLEOTIDE SEQUENCE [LARGE SCALE GENOMIC DNA]</scope>
</reference>
<reference evidence="11 12" key="3">
    <citation type="journal article" date="2004" name="Genome Res.">
        <title>The status, quality, and expansion of the NIH full-length cDNA project: the Mammalian Gene Collection (MGC).</title>
        <authorList>
            <consortium name="The MGC Project Team"/>
        </authorList>
    </citation>
    <scope>NUCLEOTIDE SEQUENCE [LARGE SCALE MRNA] (ISOFORM 2)</scope>
    <scope>VARIANT ALA-334</scope>
    <source>
        <tissue evidence="12">Testis</tissue>
    </source>
</reference>
<reference evidence="11" key="4">
    <citation type="journal article" date="2002" name="Science">
        <title>The protein kinase complement of the human genome.</title>
        <authorList>
            <person name="Manning G."/>
            <person name="Whyte D.B."/>
            <person name="Martinez R."/>
            <person name="Hunter T."/>
            <person name="Sudarsanam S."/>
        </authorList>
    </citation>
    <scope>NOMENCLATURE</scope>
</reference>
<reference key="5">
    <citation type="journal article" date="2008" name="Proc. Natl. Acad. Sci. U.S.A.">
        <title>A quantitative atlas of mitotic phosphorylation.</title>
        <authorList>
            <person name="Dephoure N."/>
            <person name="Zhou C."/>
            <person name="Villen J."/>
            <person name="Beausoleil S.A."/>
            <person name="Bakalarski C.E."/>
            <person name="Elledge S.J."/>
            <person name="Gygi S.P."/>
        </authorList>
    </citation>
    <scope>PHOSPHORYLATION [LARGE SCALE ANALYSIS] AT SER-15 AND SER-18</scope>
    <scope>IDENTIFICATION BY MASS SPECTROMETRY [LARGE SCALE ANALYSIS]</scope>
    <source>
        <tissue>Cervix carcinoma</tissue>
    </source>
</reference>
<reference key="6">
    <citation type="journal article" date="2013" name="J. Proteome Res.">
        <title>Toward a comprehensive characterization of a human cancer cell phosphoproteome.</title>
        <authorList>
            <person name="Zhou H."/>
            <person name="Di Palma S."/>
            <person name="Preisinger C."/>
            <person name="Peng M."/>
            <person name="Polat A.N."/>
            <person name="Heck A.J."/>
            <person name="Mohammed S."/>
        </authorList>
    </citation>
    <scope>PHOSPHORYLATION [LARGE SCALE ANALYSIS] AT SER-18</scope>
    <scope>IDENTIFICATION BY MASS SPECTROMETRY [LARGE SCALE ANALYSIS]</scope>
    <source>
        <tissue>Cervix carcinoma</tissue>
        <tissue>Erythroleukemia</tissue>
    </source>
</reference>
<reference key="7">
    <citation type="journal article" date="2006" name="Science">
        <title>The consensus coding sequences of human breast and colorectal cancers.</title>
        <authorList>
            <person name="Sjoeblom T."/>
            <person name="Jones S."/>
            <person name="Wood L.D."/>
            <person name="Parsons D.W."/>
            <person name="Lin J."/>
            <person name="Barber T.D."/>
            <person name="Mandelker D."/>
            <person name="Leary R.J."/>
            <person name="Ptak J."/>
            <person name="Silliman N."/>
            <person name="Szabo S."/>
            <person name="Buckhaults P."/>
            <person name="Farrell C."/>
            <person name="Meeh P."/>
            <person name="Markowitz S.D."/>
            <person name="Willis J."/>
            <person name="Dawson D."/>
            <person name="Willson J.K.V."/>
            <person name="Gazdar A.F."/>
            <person name="Hartigan J."/>
            <person name="Wu L."/>
            <person name="Liu C."/>
            <person name="Parmigiani G."/>
            <person name="Park B.H."/>
            <person name="Bachman K.E."/>
            <person name="Papadopoulos N."/>
            <person name="Vogelstein B."/>
            <person name="Kinzler K.W."/>
            <person name="Velculescu V.E."/>
        </authorList>
    </citation>
    <scope>VARIANT [LARGE SCALE ANALYSIS] HIS-376</scope>
</reference>
<reference key="8">
    <citation type="journal article" date="2007" name="Nature">
        <title>Patterns of somatic mutation in human cancer genomes.</title>
        <authorList>
            <person name="Greenman C."/>
            <person name="Stephens P."/>
            <person name="Smith R."/>
            <person name="Dalgliesh G.L."/>
            <person name="Hunter C."/>
            <person name="Bignell G."/>
            <person name="Davies H."/>
            <person name="Teague J."/>
            <person name="Butler A."/>
            <person name="Stevens C."/>
            <person name="Edkins S."/>
            <person name="O'Meara S."/>
            <person name="Vastrik I."/>
            <person name="Schmidt E.E."/>
            <person name="Avis T."/>
            <person name="Barthorpe S."/>
            <person name="Bhamra G."/>
            <person name="Buck G."/>
            <person name="Choudhury B."/>
            <person name="Clements J."/>
            <person name="Cole J."/>
            <person name="Dicks E."/>
            <person name="Forbes S."/>
            <person name="Gray K."/>
            <person name="Halliday K."/>
            <person name="Harrison R."/>
            <person name="Hills K."/>
            <person name="Hinton J."/>
            <person name="Jenkinson A."/>
            <person name="Jones D."/>
            <person name="Menzies A."/>
            <person name="Mironenko T."/>
            <person name="Perry J."/>
            <person name="Raine K."/>
            <person name="Richardson D."/>
            <person name="Shepherd R."/>
            <person name="Small A."/>
            <person name="Tofts C."/>
            <person name="Varian J."/>
            <person name="Webb T."/>
            <person name="West S."/>
            <person name="Widaa S."/>
            <person name="Yates A."/>
            <person name="Cahill D.P."/>
            <person name="Louis D.N."/>
            <person name="Goldstraw P."/>
            <person name="Nicholson A.G."/>
            <person name="Brasseur F."/>
            <person name="Looijenga L."/>
            <person name="Weber B.L."/>
            <person name="Chiew Y.-E."/>
            <person name="DeFazio A."/>
            <person name="Greaves M.F."/>
            <person name="Green A.R."/>
            <person name="Campbell P."/>
            <person name="Birney E."/>
            <person name="Easton D.F."/>
            <person name="Chenevix-Trench G."/>
            <person name="Tan M.-H."/>
            <person name="Khoo S.K."/>
            <person name="Teh B.T."/>
            <person name="Yuen S.T."/>
            <person name="Leung S.Y."/>
            <person name="Wooster R."/>
            <person name="Futreal P.A."/>
            <person name="Stratton M.R."/>
        </authorList>
    </citation>
    <scope>VARIANTS [LARGE SCALE ANALYSIS] THR-454 AND LYS-467</scope>
</reference>
<reference key="9">
    <citation type="journal article" date="2017" name="Hum. Genet.">
        <title>Expanding the genetic heterogeneity of intellectual disability.</title>
        <authorList>
            <person name="Anazi S."/>
            <person name="Maddirevula S."/>
            <person name="Salpietro V."/>
            <person name="Asi Y.T."/>
            <person name="Alsahli S."/>
            <person name="Alhashem A."/>
            <person name="Shamseldin H.E."/>
            <person name="AlZahrani F."/>
            <person name="Patel N."/>
            <person name="Ibrahim N."/>
            <person name="Abdulwahab F.M."/>
            <person name="Hashem M."/>
            <person name="Alhashmi N."/>
            <person name="Al Murshedi F."/>
            <person name="Al Kindy A."/>
            <person name="Alshaer A."/>
            <person name="Rumayyan A."/>
            <person name="Al Tala S."/>
            <person name="Kurdi W."/>
            <person name="Alsaman A."/>
            <person name="Alasmari A."/>
            <person name="Banu S."/>
            <person name="Sultan T."/>
            <person name="Saleh M.M."/>
            <person name="Alkuraya H."/>
            <person name="Salih M.A."/>
            <person name="Aldhalaan H."/>
            <person name="Ben-Omran T."/>
            <person name="Al Musafri F."/>
            <person name="Ali R."/>
            <person name="Suleiman J."/>
            <person name="Tabarki B."/>
            <person name="El-Hattab A.W."/>
            <person name="Bupp C."/>
            <person name="Alfadhel M."/>
            <person name="Al Tassan N."/>
            <person name="Monies D."/>
            <person name="Arold S.T."/>
            <person name="Abouelhoda M."/>
            <person name="Lashley T."/>
            <person name="Houlden H."/>
            <person name="Faqeih E."/>
            <person name="Alkuraya F.S."/>
        </authorList>
    </citation>
    <scope>VARIANT LEU-151</scope>
</reference>
<reference key="10">
    <citation type="journal article" date="2018" name="Hum. Genet.">
        <title>Correction to: Expanding the genetic heterogeneity of intellectual disability.</title>
        <authorList>
            <person name="Anazi S."/>
            <person name="Maddirevula S."/>
            <person name="Salpietro V."/>
            <person name="Asi Y.T."/>
            <person name="Alsahli S."/>
            <person name="Alhashem A."/>
            <person name="Shamseldin H.E."/>
            <person name="AlZahrani F."/>
            <person name="Patel N."/>
            <person name="Ibrahim N."/>
            <person name="Abdulwahab F.M."/>
            <person name="Hashem M."/>
            <person name="Alhashmi N."/>
            <person name="Al Murshedi F."/>
            <person name="Al Kindy A."/>
            <person name="Alshaer A."/>
            <person name="Rumayyan A."/>
            <person name="Al Tala S."/>
            <person name="Kurdi W."/>
            <person name="Alsaman A."/>
            <person name="Alasmari A."/>
            <person name="Banu S."/>
            <person name="Sultan T."/>
            <person name="Saleh M.M."/>
            <person name="Alkuraya H."/>
            <person name="Salih M.A."/>
            <person name="Aldhalaan H."/>
            <person name="Ben-Omran T."/>
            <person name="Al Musafri F."/>
            <person name="Ali R."/>
            <person name="Suleiman J."/>
            <person name="Tabarki B."/>
            <person name="El-Hattab A.W."/>
            <person name="Bupp C."/>
            <person name="Alfadhel M."/>
            <person name="Al Tassan N."/>
            <person name="Monies D."/>
            <person name="Arold S.T."/>
            <person name="Abouelhoda M."/>
            <person name="Lashley T."/>
            <person name="Houlden H."/>
            <person name="Faqeih E."/>
            <person name="Alkuraya F.S."/>
        </authorList>
    </citation>
    <scope>ERRATUM OF PUBMED:28940097</scope>
</reference>
<keyword id="KW-0025">Alternative splicing</keyword>
<keyword id="KW-0067">ATP-binding</keyword>
<keyword id="KW-0418">Kinase</keyword>
<keyword id="KW-0460">Magnesium</keyword>
<keyword id="KW-0479">Metal-binding</keyword>
<keyword id="KW-0547">Nucleotide-binding</keyword>
<keyword id="KW-0597">Phosphoprotein</keyword>
<keyword id="KW-1267">Proteomics identification</keyword>
<keyword id="KW-1185">Reference proteome</keyword>
<keyword id="KW-0723">Serine/threonine-protein kinase</keyword>
<keyword id="KW-0808">Transferase</keyword>
<organism>
    <name type="scientific">Homo sapiens</name>
    <name type="common">Human</name>
    <dbReference type="NCBI Taxonomy" id="9606"/>
    <lineage>
        <taxon>Eukaryota</taxon>
        <taxon>Metazoa</taxon>
        <taxon>Chordata</taxon>
        <taxon>Craniata</taxon>
        <taxon>Vertebrata</taxon>
        <taxon>Euteleostomi</taxon>
        <taxon>Mammalia</taxon>
        <taxon>Eutheria</taxon>
        <taxon>Euarchontoglires</taxon>
        <taxon>Primates</taxon>
        <taxon>Haplorrhini</taxon>
        <taxon>Catarrhini</taxon>
        <taxon>Hominidae</taxon>
        <taxon>Homo</taxon>
    </lineage>
</organism>
<accession>Q86UX6</accession>
<accession>Q5T0Q5</accession>
<accession>Q86UE1</accession>
<dbReference type="EC" id="2.7.11.1"/>
<dbReference type="EMBL" id="AY098866">
    <property type="protein sequence ID" value="AAM21719.1"/>
    <property type="molecule type" value="mRNA"/>
</dbReference>
<dbReference type="EMBL" id="AL512622">
    <property type="status" value="NOT_ANNOTATED_CDS"/>
    <property type="molecule type" value="Genomic_DNA"/>
</dbReference>
<dbReference type="EMBL" id="AL590105">
    <property type="status" value="NOT_ANNOTATED_CDS"/>
    <property type="molecule type" value="Genomic_DNA"/>
</dbReference>
<dbReference type="EMBL" id="BC045760">
    <property type="protein sequence ID" value="AAH45760.1"/>
    <property type="molecule type" value="mRNA"/>
</dbReference>
<dbReference type="CCDS" id="CCDS7666.1">
    <molecule id="Q86UX6-1"/>
</dbReference>
<dbReference type="CCDS" id="CCDS81525.1">
    <molecule id="Q86UX6-2"/>
</dbReference>
<dbReference type="RefSeq" id="NP_001305808.1">
    <molecule id="Q86UX6-2"/>
    <property type="nucleotide sequence ID" value="NM_001318879.2"/>
</dbReference>
<dbReference type="RefSeq" id="NP_775846.2">
    <molecule id="Q86UX6-1"/>
    <property type="nucleotide sequence ID" value="NM_173575.3"/>
</dbReference>
<dbReference type="RefSeq" id="XP_011537995.1">
    <molecule id="Q86UX6-2"/>
    <property type="nucleotide sequence ID" value="XM_011539693.3"/>
</dbReference>
<dbReference type="RefSeq" id="XP_011537996.1">
    <molecule id="Q86UX6-2"/>
    <property type="nucleotide sequence ID" value="XM_011539694.2"/>
</dbReference>
<dbReference type="RefSeq" id="XP_011537997.1">
    <molecule id="Q86UX6-2"/>
    <property type="nucleotide sequence ID" value="XM_011539695.2"/>
</dbReference>
<dbReference type="RefSeq" id="XP_011537998.1">
    <property type="nucleotide sequence ID" value="XM_011539696.1"/>
</dbReference>
<dbReference type="RefSeq" id="XP_047281071.1">
    <molecule id="Q86UX6-2"/>
    <property type="nucleotide sequence ID" value="XM_047425115.1"/>
</dbReference>
<dbReference type="RefSeq" id="XP_054221619.1">
    <molecule id="Q86UX6-2"/>
    <property type="nucleotide sequence ID" value="XM_054365644.1"/>
</dbReference>
<dbReference type="RefSeq" id="XP_054221621.1">
    <molecule id="Q86UX6-2"/>
    <property type="nucleotide sequence ID" value="XM_054365646.1"/>
</dbReference>
<dbReference type="RefSeq" id="XP_054221622.1">
    <molecule id="Q86UX6-2"/>
    <property type="nucleotide sequence ID" value="XM_054365647.1"/>
</dbReference>
<dbReference type="RefSeq" id="XP_054221624.1">
    <molecule id="Q86UX6-2"/>
    <property type="nucleotide sequence ID" value="XM_054365649.1"/>
</dbReference>
<dbReference type="SMR" id="Q86UX6"/>
<dbReference type="BioGRID" id="129429">
    <property type="interactions" value="88"/>
</dbReference>
<dbReference type="FunCoup" id="Q86UX6">
    <property type="interactions" value="874"/>
</dbReference>
<dbReference type="IntAct" id="Q86UX6">
    <property type="interactions" value="83"/>
</dbReference>
<dbReference type="MINT" id="Q86UX6"/>
<dbReference type="STRING" id="9606.ENSP00000298630"/>
<dbReference type="BindingDB" id="Q86UX6"/>
<dbReference type="ChEMBL" id="CHEMBL5405"/>
<dbReference type="iPTMnet" id="Q86UX6"/>
<dbReference type="PhosphoSitePlus" id="Q86UX6"/>
<dbReference type="SwissPalm" id="Q86UX6"/>
<dbReference type="BioMuta" id="STK32C"/>
<dbReference type="DMDM" id="74762451"/>
<dbReference type="CPTAC" id="non-CPTAC-5654"/>
<dbReference type="CPTAC" id="non-CPTAC-5655"/>
<dbReference type="jPOST" id="Q86UX6"/>
<dbReference type="MassIVE" id="Q86UX6"/>
<dbReference type="PaxDb" id="9606-ENSP00000298630"/>
<dbReference type="PeptideAtlas" id="Q86UX6"/>
<dbReference type="ProteomicsDB" id="69930">
    <molecule id="Q86UX6-1"/>
</dbReference>
<dbReference type="ProteomicsDB" id="69931">
    <molecule id="Q86UX6-2"/>
</dbReference>
<dbReference type="Pumba" id="Q86UX6"/>
<dbReference type="Antibodypedia" id="19318">
    <property type="antibodies" value="139 antibodies from 29 providers"/>
</dbReference>
<dbReference type="DNASU" id="282974"/>
<dbReference type="Ensembl" id="ENST00000298630.8">
    <molecule id="Q86UX6-1"/>
    <property type="protein sequence ID" value="ENSP00000298630.3"/>
    <property type="gene ID" value="ENSG00000165752.17"/>
</dbReference>
<dbReference type="Ensembl" id="ENST00000368622.5">
    <molecule id="Q86UX6-2"/>
    <property type="protein sequence ID" value="ENSP00000357611.1"/>
    <property type="gene ID" value="ENSG00000165752.17"/>
</dbReference>
<dbReference type="GeneID" id="282974"/>
<dbReference type="KEGG" id="hsa:282974"/>
<dbReference type="MANE-Select" id="ENST00000298630.8">
    <property type="protein sequence ID" value="ENSP00000298630.3"/>
    <property type="RefSeq nucleotide sequence ID" value="NM_173575.4"/>
    <property type="RefSeq protein sequence ID" value="NP_775846.2"/>
</dbReference>
<dbReference type="UCSC" id="uc001lld.2">
    <molecule id="Q86UX6-1"/>
    <property type="organism name" value="human"/>
</dbReference>
<dbReference type="AGR" id="HGNC:21332"/>
<dbReference type="CTD" id="282974"/>
<dbReference type="DisGeNET" id="282974"/>
<dbReference type="GeneCards" id="STK32C"/>
<dbReference type="HGNC" id="HGNC:21332">
    <property type="gene designation" value="STK32C"/>
</dbReference>
<dbReference type="HPA" id="ENSG00000165752">
    <property type="expression patterns" value="Tissue enhanced (brain, testis)"/>
</dbReference>
<dbReference type="neXtProt" id="NX_Q86UX6"/>
<dbReference type="OpenTargets" id="ENSG00000165752"/>
<dbReference type="PharmGKB" id="PA134888050"/>
<dbReference type="VEuPathDB" id="HostDB:ENSG00000165752"/>
<dbReference type="eggNOG" id="KOG0598">
    <property type="taxonomic scope" value="Eukaryota"/>
</dbReference>
<dbReference type="GeneTree" id="ENSGT00940000160573"/>
<dbReference type="HOGENOM" id="CLU_000288_63_5_1"/>
<dbReference type="InParanoid" id="Q86UX6"/>
<dbReference type="OMA" id="HFILLRC"/>
<dbReference type="OrthoDB" id="354826at2759"/>
<dbReference type="PAN-GO" id="Q86UX6">
    <property type="GO annotations" value="3 GO annotations based on evolutionary models"/>
</dbReference>
<dbReference type="PhylomeDB" id="Q86UX6"/>
<dbReference type="TreeFam" id="TF313395"/>
<dbReference type="PathwayCommons" id="Q86UX6"/>
<dbReference type="SignaLink" id="Q86UX6"/>
<dbReference type="BioGRID-ORCS" id="282974">
    <property type="hits" value="10 hits in 1153 CRISPR screens"/>
</dbReference>
<dbReference type="CD-CODE" id="FB4E32DD">
    <property type="entry name" value="Presynaptic clusters and postsynaptic densities"/>
</dbReference>
<dbReference type="ChiTaRS" id="STK32C">
    <property type="organism name" value="human"/>
</dbReference>
<dbReference type="GenomeRNAi" id="282974"/>
<dbReference type="Pharos" id="Q86UX6">
    <property type="development level" value="Tbio"/>
</dbReference>
<dbReference type="PRO" id="PR:Q86UX6"/>
<dbReference type="Proteomes" id="UP000005640">
    <property type="component" value="Chromosome 10"/>
</dbReference>
<dbReference type="RNAct" id="Q86UX6">
    <property type="molecule type" value="protein"/>
</dbReference>
<dbReference type="Bgee" id="ENSG00000165752">
    <property type="expression patterns" value="Expressed in right testis and 132 other cell types or tissues"/>
</dbReference>
<dbReference type="ExpressionAtlas" id="Q86UX6">
    <property type="expression patterns" value="baseline and differential"/>
</dbReference>
<dbReference type="GO" id="GO:0005524">
    <property type="term" value="F:ATP binding"/>
    <property type="evidence" value="ECO:0007669"/>
    <property type="project" value="UniProtKB-KW"/>
</dbReference>
<dbReference type="GO" id="GO:0046872">
    <property type="term" value="F:metal ion binding"/>
    <property type="evidence" value="ECO:0007669"/>
    <property type="project" value="UniProtKB-KW"/>
</dbReference>
<dbReference type="GO" id="GO:0106310">
    <property type="term" value="F:protein serine kinase activity"/>
    <property type="evidence" value="ECO:0007669"/>
    <property type="project" value="RHEA"/>
</dbReference>
<dbReference type="GO" id="GO:0004674">
    <property type="term" value="F:protein serine/threonine kinase activity"/>
    <property type="evidence" value="ECO:0000318"/>
    <property type="project" value="GO_Central"/>
</dbReference>
<dbReference type="GO" id="GO:0035556">
    <property type="term" value="P:intracellular signal transduction"/>
    <property type="evidence" value="ECO:0000318"/>
    <property type="project" value="GO_Central"/>
</dbReference>
<dbReference type="CDD" id="cd05578">
    <property type="entry name" value="STKc_Yank1"/>
    <property type="match status" value="1"/>
</dbReference>
<dbReference type="FunFam" id="1.10.510.10:FF:000169">
    <property type="entry name" value="Serine/threonine-protein kinase 32A"/>
    <property type="match status" value="1"/>
</dbReference>
<dbReference type="FunFam" id="3.30.200.20:FF:000347">
    <property type="entry name" value="serine/threonine-protein kinase 32A isoform X2"/>
    <property type="match status" value="1"/>
</dbReference>
<dbReference type="FunFam" id="3.30.200.20:FF:000160">
    <property type="entry name" value="Serine/threonine-protein kinase 32C"/>
    <property type="match status" value="1"/>
</dbReference>
<dbReference type="Gene3D" id="3.30.200.20">
    <property type="entry name" value="Phosphorylase Kinase, domain 1"/>
    <property type="match status" value="2"/>
</dbReference>
<dbReference type="Gene3D" id="1.10.510.10">
    <property type="entry name" value="Transferase(Phosphotransferase) domain 1"/>
    <property type="match status" value="1"/>
</dbReference>
<dbReference type="InterPro" id="IPR011009">
    <property type="entry name" value="Kinase-like_dom_sf"/>
</dbReference>
<dbReference type="InterPro" id="IPR000719">
    <property type="entry name" value="Prot_kinase_dom"/>
</dbReference>
<dbReference type="InterPro" id="IPR017441">
    <property type="entry name" value="Protein_kinase_ATP_BS"/>
</dbReference>
<dbReference type="InterPro" id="IPR008271">
    <property type="entry name" value="Ser/Thr_kinase_AS"/>
</dbReference>
<dbReference type="PANTHER" id="PTHR24355">
    <property type="entry name" value="G PROTEIN-COUPLED RECEPTOR KINASE/RIBOSOMAL PROTEIN S6 KINASE"/>
    <property type="match status" value="1"/>
</dbReference>
<dbReference type="PANTHER" id="PTHR24355:SF32">
    <property type="entry name" value="SERINE_THREONINE KINASE 32C"/>
    <property type="match status" value="1"/>
</dbReference>
<dbReference type="Pfam" id="PF00069">
    <property type="entry name" value="Pkinase"/>
    <property type="match status" value="1"/>
</dbReference>
<dbReference type="SMART" id="SM00220">
    <property type="entry name" value="S_TKc"/>
    <property type="match status" value="1"/>
</dbReference>
<dbReference type="SUPFAM" id="SSF56112">
    <property type="entry name" value="Protein kinase-like (PK-like)"/>
    <property type="match status" value="1"/>
</dbReference>
<dbReference type="PROSITE" id="PS00107">
    <property type="entry name" value="PROTEIN_KINASE_ATP"/>
    <property type="match status" value="1"/>
</dbReference>
<dbReference type="PROSITE" id="PS50011">
    <property type="entry name" value="PROTEIN_KINASE_DOM"/>
    <property type="match status" value="1"/>
</dbReference>
<dbReference type="PROSITE" id="PS00108">
    <property type="entry name" value="PROTEIN_KINASE_ST"/>
    <property type="match status" value="1"/>
</dbReference>
<feature type="chain" id="PRO_0000232415" description="Serine/threonine-protein kinase 32C">
    <location>
        <begin position="1"/>
        <end position="486"/>
    </location>
</feature>
<feature type="domain" description="Protein kinase" evidence="3">
    <location>
        <begin position="93"/>
        <end position="353"/>
    </location>
</feature>
<feature type="region of interest" description="Disordered" evidence="5">
    <location>
        <begin position="1"/>
        <end position="56"/>
    </location>
</feature>
<feature type="region of interest" description="Disordered" evidence="5">
    <location>
        <begin position="396"/>
        <end position="419"/>
    </location>
</feature>
<feature type="region of interest" description="Disordered" evidence="5">
    <location>
        <begin position="444"/>
        <end position="486"/>
    </location>
</feature>
<feature type="compositionally biased region" description="Low complexity" evidence="5">
    <location>
        <begin position="24"/>
        <end position="33"/>
    </location>
</feature>
<feature type="compositionally biased region" description="Basic residues" evidence="5">
    <location>
        <begin position="396"/>
        <end position="405"/>
    </location>
</feature>
<feature type="active site" description="Proton acceptor" evidence="1 3 4">
    <location>
        <position position="216"/>
    </location>
</feature>
<feature type="binding site" evidence="1 3">
    <location>
        <begin position="99"/>
        <end position="107"/>
    </location>
    <ligand>
        <name>ATP</name>
        <dbReference type="ChEBI" id="CHEBI:30616"/>
    </ligand>
</feature>
<feature type="binding site" evidence="1 3">
    <location>
        <position position="122"/>
    </location>
    <ligand>
        <name>ATP</name>
        <dbReference type="ChEBI" id="CHEBI:30616"/>
    </ligand>
</feature>
<feature type="modified residue" description="Phosphoserine" evidence="2">
    <location>
        <position position="10"/>
    </location>
</feature>
<feature type="modified residue" description="Phosphoserine" evidence="15">
    <location>
        <position position="15"/>
    </location>
</feature>
<feature type="modified residue" description="Phosphoserine" evidence="15 16">
    <location>
        <position position="18"/>
    </location>
</feature>
<feature type="splice variant" id="VSP_051998" description="In isoform 2." evidence="10">
    <location>
        <begin position="1"/>
        <end position="117"/>
    </location>
</feature>
<feature type="sequence variant" id="VAR_084657" description="Found in a patient with global developmental delay; uncertain significance." evidence="9">
    <original>V</original>
    <variation>L</variation>
    <location>
        <position position="151"/>
    </location>
</feature>
<feature type="sequence variant" id="VAR_025900" description="In dbSNP:rs17854384." evidence="6">
    <original>T</original>
    <variation>A</variation>
    <location>
        <position position="334"/>
    </location>
</feature>
<feature type="sequence variant" id="VAR_035637" description="In a colorectal cancer sample; somatic mutation; dbSNP:rs764558009." evidence="7">
    <original>R</original>
    <variation>H</variation>
    <location>
        <position position="376"/>
    </location>
</feature>
<feature type="sequence variant" id="VAR_041170" description="In dbSNP:rs56109103." evidence="8">
    <original>A</original>
    <variation>T</variation>
    <location>
        <position position="454"/>
    </location>
</feature>
<feature type="sequence variant" id="VAR_041171" description="In dbSNP:rs55812591." evidence="8">
    <original>E</original>
    <variation>K</variation>
    <location>
        <position position="467"/>
    </location>
</feature>
<gene>
    <name evidence="12" type="primary">STK32C</name>
    <name type="synonym">YANK3</name>
</gene>
<evidence type="ECO:0000250" key="1">
    <source>
        <dbReference type="UniProtKB" id="Q60592"/>
    </source>
</evidence>
<evidence type="ECO:0000250" key="2">
    <source>
        <dbReference type="UniProtKB" id="Q8QZV4"/>
    </source>
</evidence>
<evidence type="ECO:0000255" key="3">
    <source>
        <dbReference type="PROSITE-ProRule" id="PRU00159"/>
    </source>
</evidence>
<evidence type="ECO:0000255" key="4">
    <source>
        <dbReference type="PROSITE-ProRule" id="PRU10027"/>
    </source>
</evidence>
<evidence type="ECO:0000256" key="5">
    <source>
        <dbReference type="SAM" id="MobiDB-lite"/>
    </source>
</evidence>
<evidence type="ECO:0000269" key="6">
    <source>
    </source>
</evidence>
<evidence type="ECO:0000269" key="7">
    <source>
    </source>
</evidence>
<evidence type="ECO:0000269" key="8">
    <source>
    </source>
</evidence>
<evidence type="ECO:0000269" key="9">
    <source>
    </source>
</evidence>
<evidence type="ECO:0000303" key="10">
    <source>
    </source>
</evidence>
<evidence type="ECO:0000305" key="11"/>
<evidence type="ECO:0000312" key="12">
    <source>
        <dbReference type="EMBL" id="AAH45760.1"/>
    </source>
</evidence>
<evidence type="ECO:0000312" key="13">
    <source>
        <dbReference type="EMBL" id="AAM21719.1"/>
    </source>
</evidence>
<evidence type="ECO:0000312" key="14">
    <source>
        <dbReference type="EMBL" id="AL512622"/>
    </source>
</evidence>
<evidence type="ECO:0007744" key="15">
    <source>
    </source>
</evidence>
<evidence type="ECO:0007744" key="16">
    <source>
    </source>
</evidence>